<name>SLAG_MACLB</name>
<keyword id="KW-1015">Disulfide bond</keyword>
<keyword id="KW-1199">Hemostasis impairing toxin</keyword>
<keyword id="KW-0964">Secreted</keyword>
<keyword id="KW-0732">Signal</keyword>
<keyword id="KW-0800">Toxin</keyword>
<reference key="1">
    <citation type="journal article" date="2009" name="Toxicon">
        <title>C-type lectin protein isoforms of Macrovipera lebetina: cDNA cloning and genetic diversity.</title>
        <authorList>
            <person name="Jebali J."/>
            <person name="Bazaa A."/>
            <person name="Sarray S."/>
            <person name="Benhaj K."/>
            <person name="Karboul A."/>
            <person name="El Ayeb M."/>
            <person name="Marrakchi N."/>
            <person name="Gargouri A."/>
        </authorList>
    </citation>
    <scope>NUCLEOTIDE SEQUENCE [MRNA]</scope>
</reference>
<proteinExistence type="evidence at transcript level"/>
<comment type="function">
    <text evidence="1">Interferes with one step of hemostasis (modulation of platelet aggregation, or coagulation cascade, for example).</text>
</comment>
<comment type="subunit">
    <text evidence="1">Heterodimer; disulfide-linked.</text>
</comment>
<comment type="subcellular location">
    <subcellularLocation>
        <location evidence="1">Secreted</location>
    </subcellularLocation>
</comment>
<comment type="tissue specificity">
    <text>Expressed by the venom gland.</text>
</comment>
<comment type="miscellaneous">
    <text>Shows greater sequence similarity to the alpha than beta subunits compared to other heterodimer snaclecs.</text>
</comment>
<comment type="similarity">
    <text evidence="3">Belongs to the snaclec family.</text>
</comment>
<feature type="signal peptide" evidence="1">
    <location>
        <begin position="1"/>
        <end position="23"/>
    </location>
</feature>
<feature type="chain" id="PRO_0000356332" description="Snaclec A16">
    <location>
        <begin position="24"/>
        <end position="157"/>
    </location>
</feature>
<feature type="domain" description="C-type lectin" evidence="2">
    <location>
        <begin position="34"/>
        <end position="150"/>
    </location>
</feature>
<feature type="disulfide bond" evidence="2">
    <location>
        <begin position="27"/>
        <end position="38"/>
    </location>
</feature>
<feature type="disulfide bond" evidence="2">
    <location>
        <begin position="55"/>
        <end position="149"/>
    </location>
</feature>
<feature type="disulfide bond" description="Interchain" evidence="2">
    <location>
        <position position="103"/>
    </location>
</feature>
<feature type="disulfide bond" evidence="2">
    <location>
        <begin position="124"/>
        <end position="141"/>
    </location>
</feature>
<evidence type="ECO:0000250" key="1"/>
<evidence type="ECO:0000255" key="2">
    <source>
        <dbReference type="PROSITE-ProRule" id="PRU00040"/>
    </source>
</evidence>
<evidence type="ECO:0000305" key="3"/>
<sequence>MGRLISVSFGLLVVFLSLSGTGADQDCLPGWSFYEGHCYKVFNVKKTWEDAEKFCQKQSNGKHLATIEWLGKANFVADLVTLMNSDPDLDWIGLRVEDKRQQCSSHWTDGSAVSYENVVHNTKCFGLDQKTGYRTWVALRCELAYHFICMSRVPRGA</sequence>
<accession>B4XSZ1</accession>
<protein>
    <recommendedName>
        <fullName>Snaclec A16</fullName>
    </recommendedName>
    <alternativeName>
        <fullName>C-type lectin A16</fullName>
    </alternativeName>
</protein>
<dbReference type="EMBL" id="EU085453">
    <property type="protein sequence ID" value="ABW82663.1"/>
    <property type="molecule type" value="mRNA"/>
</dbReference>
<dbReference type="SMR" id="B4XSZ1"/>
<dbReference type="GO" id="GO:0005576">
    <property type="term" value="C:extracellular region"/>
    <property type="evidence" value="ECO:0007669"/>
    <property type="project" value="UniProtKB-SubCell"/>
</dbReference>
<dbReference type="GO" id="GO:0090729">
    <property type="term" value="F:toxin activity"/>
    <property type="evidence" value="ECO:0007669"/>
    <property type="project" value="UniProtKB-KW"/>
</dbReference>
<dbReference type="FunFam" id="3.10.100.10:FF:000087">
    <property type="entry name" value="Snaclec rhodocetin subunit delta"/>
    <property type="match status" value="1"/>
</dbReference>
<dbReference type="Gene3D" id="3.10.100.10">
    <property type="entry name" value="Mannose-Binding Protein A, subunit A"/>
    <property type="match status" value="1"/>
</dbReference>
<dbReference type="InterPro" id="IPR001304">
    <property type="entry name" value="C-type_lectin-like"/>
</dbReference>
<dbReference type="InterPro" id="IPR016186">
    <property type="entry name" value="C-type_lectin-like/link_sf"/>
</dbReference>
<dbReference type="InterPro" id="IPR050111">
    <property type="entry name" value="C-type_lectin/snaclec_domain"/>
</dbReference>
<dbReference type="InterPro" id="IPR016187">
    <property type="entry name" value="CTDL_fold"/>
</dbReference>
<dbReference type="PANTHER" id="PTHR22803">
    <property type="entry name" value="MANNOSE, PHOSPHOLIPASE, LECTIN RECEPTOR RELATED"/>
    <property type="match status" value="1"/>
</dbReference>
<dbReference type="Pfam" id="PF00059">
    <property type="entry name" value="Lectin_C"/>
    <property type="match status" value="1"/>
</dbReference>
<dbReference type="PRINTS" id="PR01504">
    <property type="entry name" value="PNCREATITSAP"/>
</dbReference>
<dbReference type="SMART" id="SM00034">
    <property type="entry name" value="CLECT"/>
    <property type="match status" value="1"/>
</dbReference>
<dbReference type="SUPFAM" id="SSF56436">
    <property type="entry name" value="C-type lectin-like"/>
    <property type="match status" value="1"/>
</dbReference>
<dbReference type="PROSITE" id="PS50041">
    <property type="entry name" value="C_TYPE_LECTIN_2"/>
    <property type="match status" value="1"/>
</dbReference>
<organism>
    <name type="scientific">Macrovipera lebetinus</name>
    <name type="common">Levantine viper</name>
    <name type="synonym">Vipera lebetina</name>
    <dbReference type="NCBI Taxonomy" id="3148341"/>
    <lineage>
        <taxon>Eukaryota</taxon>
        <taxon>Metazoa</taxon>
        <taxon>Chordata</taxon>
        <taxon>Craniata</taxon>
        <taxon>Vertebrata</taxon>
        <taxon>Euteleostomi</taxon>
        <taxon>Lepidosauria</taxon>
        <taxon>Squamata</taxon>
        <taxon>Bifurcata</taxon>
        <taxon>Unidentata</taxon>
        <taxon>Episquamata</taxon>
        <taxon>Toxicofera</taxon>
        <taxon>Serpentes</taxon>
        <taxon>Colubroidea</taxon>
        <taxon>Viperidae</taxon>
        <taxon>Viperinae</taxon>
        <taxon>Macrovipera</taxon>
    </lineage>
</organism>